<geneLocation type="chloroplast"/>
<protein>
    <recommendedName>
        <fullName evidence="2">Small ribosomal subunit protein uS8c</fullName>
    </recommendedName>
    <alternativeName>
        <fullName>30S ribosomal protein S8, chloroplastic</fullName>
    </alternativeName>
</protein>
<accession>B2Y1Z5</accession>
<name>RR8_WELMI</name>
<keyword id="KW-0150">Chloroplast</keyword>
<keyword id="KW-0934">Plastid</keyword>
<keyword id="KW-0687">Ribonucleoprotein</keyword>
<keyword id="KW-0689">Ribosomal protein</keyword>
<keyword id="KW-0694">RNA-binding</keyword>
<keyword id="KW-0699">rRNA-binding</keyword>
<sequence length="128" mass="14714">MDTIANLITSIRNAYIVDKKIVRVTATRTNENIGRILLQEGFIKSIREHKDGQKSFLIFTLKYRKKKEKRITLKRISKPGRKIYSDFPNMPKVLGGMGIAIVSTSRGIMTDREARQKKIGGEILCYVW</sequence>
<feature type="chain" id="PRO_1000165296" description="Small ribosomal subunit protein uS8c">
    <location>
        <begin position="1"/>
        <end position="128"/>
    </location>
</feature>
<reference key="1">
    <citation type="journal article" date="2008" name="BMC Evol. Biol.">
        <title>The complete plastid genome sequence of Welwitschia mirabilis: an unusually compact plastome with accelerated divergence rates.</title>
        <authorList>
            <person name="McCoy S.R."/>
            <person name="Kuehl J.V."/>
            <person name="Boore J.L."/>
            <person name="Raubeson L.A."/>
        </authorList>
    </citation>
    <scope>NUCLEOTIDE SEQUENCE [LARGE SCALE GENOMIC DNA]</scope>
</reference>
<reference key="2">
    <citation type="journal article" date="2009" name="Mol. Phylogenet. Evol.">
        <title>Evolution of reduced and compact chloroplast genomes (cpDNAs) in gnetophytes: Selection toward a lower-cost strategy.</title>
        <authorList>
            <person name="Wu C.-S."/>
            <person name="Lai Y.-T."/>
            <person name="Lin C.-P."/>
            <person name="Wang Y.-N."/>
            <person name="Chaw S.-M."/>
        </authorList>
    </citation>
    <scope>NUCLEOTIDE SEQUENCE [LARGE SCALE GENOMIC DNA]</scope>
</reference>
<evidence type="ECO:0000250" key="1"/>
<evidence type="ECO:0000305" key="2"/>
<gene>
    <name type="primary">rps8</name>
</gene>
<dbReference type="EMBL" id="EU342371">
    <property type="protein sequence ID" value="ABY26825.1"/>
    <property type="molecule type" value="Genomic_DNA"/>
</dbReference>
<dbReference type="EMBL" id="AP009568">
    <property type="protein sequence ID" value="BAH11193.1"/>
    <property type="molecule type" value="Genomic_DNA"/>
</dbReference>
<dbReference type="RefSeq" id="YP_001876612.1">
    <property type="nucleotide sequence ID" value="NC_010654.1"/>
</dbReference>
<dbReference type="SMR" id="B2Y1Z5"/>
<dbReference type="GeneID" id="6276258"/>
<dbReference type="GO" id="GO:0009507">
    <property type="term" value="C:chloroplast"/>
    <property type="evidence" value="ECO:0007669"/>
    <property type="project" value="UniProtKB-SubCell"/>
</dbReference>
<dbReference type="GO" id="GO:1990904">
    <property type="term" value="C:ribonucleoprotein complex"/>
    <property type="evidence" value="ECO:0007669"/>
    <property type="project" value="UniProtKB-KW"/>
</dbReference>
<dbReference type="GO" id="GO:0005840">
    <property type="term" value="C:ribosome"/>
    <property type="evidence" value="ECO:0007669"/>
    <property type="project" value="UniProtKB-KW"/>
</dbReference>
<dbReference type="GO" id="GO:0019843">
    <property type="term" value="F:rRNA binding"/>
    <property type="evidence" value="ECO:0007669"/>
    <property type="project" value="UniProtKB-UniRule"/>
</dbReference>
<dbReference type="GO" id="GO:0003735">
    <property type="term" value="F:structural constituent of ribosome"/>
    <property type="evidence" value="ECO:0007669"/>
    <property type="project" value="InterPro"/>
</dbReference>
<dbReference type="GO" id="GO:0006412">
    <property type="term" value="P:translation"/>
    <property type="evidence" value="ECO:0007669"/>
    <property type="project" value="UniProtKB-UniRule"/>
</dbReference>
<dbReference type="FunFam" id="3.30.1490.10:FF:000001">
    <property type="entry name" value="30S ribosomal protein S8"/>
    <property type="match status" value="1"/>
</dbReference>
<dbReference type="Gene3D" id="3.30.1370.30">
    <property type="match status" value="1"/>
</dbReference>
<dbReference type="Gene3D" id="3.30.1490.10">
    <property type="match status" value="1"/>
</dbReference>
<dbReference type="HAMAP" id="MF_01302_B">
    <property type="entry name" value="Ribosomal_uS8_B"/>
    <property type="match status" value="1"/>
</dbReference>
<dbReference type="InterPro" id="IPR000630">
    <property type="entry name" value="Ribosomal_uS8"/>
</dbReference>
<dbReference type="InterPro" id="IPR047863">
    <property type="entry name" value="Ribosomal_uS8_CS"/>
</dbReference>
<dbReference type="InterPro" id="IPR035987">
    <property type="entry name" value="Ribosomal_uS8_sf"/>
</dbReference>
<dbReference type="NCBIfam" id="NF001109">
    <property type="entry name" value="PRK00136.1"/>
    <property type="match status" value="1"/>
</dbReference>
<dbReference type="PANTHER" id="PTHR11758">
    <property type="entry name" value="40S RIBOSOMAL PROTEIN S15A"/>
    <property type="match status" value="1"/>
</dbReference>
<dbReference type="Pfam" id="PF00410">
    <property type="entry name" value="Ribosomal_S8"/>
    <property type="match status" value="1"/>
</dbReference>
<dbReference type="SUPFAM" id="SSF56047">
    <property type="entry name" value="Ribosomal protein S8"/>
    <property type="match status" value="1"/>
</dbReference>
<dbReference type="PROSITE" id="PS00053">
    <property type="entry name" value="RIBOSOMAL_S8"/>
    <property type="match status" value="1"/>
</dbReference>
<organism>
    <name type="scientific">Welwitschia mirabilis</name>
    <name type="common">Tree tumbo</name>
    <name type="synonym">Welwitschia bainesii</name>
    <dbReference type="NCBI Taxonomy" id="3377"/>
    <lineage>
        <taxon>Eukaryota</taxon>
        <taxon>Viridiplantae</taxon>
        <taxon>Streptophyta</taxon>
        <taxon>Embryophyta</taxon>
        <taxon>Tracheophyta</taxon>
        <taxon>Spermatophyta</taxon>
        <taxon>Gnetopsida</taxon>
        <taxon>Gnetidae</taxon>
        <taxon>Welwitschiales</taxon>
        <taxon>Welwitschiaceae</taxon>
        <taxon>Welwitschia</taxon>
    </lineage>
</organism>
<comment type="function">
    <text evidence="1">One of the primary rRNA binding proteins, it binds directly to 16S rRNA central domain where it helps coordinate assembly of the platform of the 30S subunit.</text>
</comment>
<comment type="subunit">
    <text evidence="1">Part of the 30S ribosomal subunit.</text>
</comment>
<comment type="subcellular location">
    <subcellularLocation>
        <location>Plastid</location>
        <location>Chloroplast</location>
    </subcellularLocation>
</comment>
<comment type="similarity">
    <text evidence="2">Belongs to the universal ribosomal protein uS8 family.</text>
</comment>
<proteinExistence type="inferred from homology"/>